<proteinExistence type="evidence at protein level"/>
<name>PI2R_RAT</name>
<reference key="1">
    <citation type="journal article" date="1994" name="Biochim. Biophys. Acta">
        <title>Cloning and expression of a cDNA for rat prostacyclin receptor.</title>
        <authorList>
            <person name="Sasaki Y."/>
            <person name="Usui T."/>
            <person name="Tanaka I."/>
            <person name="Nakagawa O."/>
            <person name="Sando T."/>
            <person name="Takahashi T."/>
            <person name="Namba T."/>
            <person name="Narumiya S."/>
            <person name="Nakao K."/>
        </authorList>
    </citation>
    <scope>NUCLEOTIDE SEQUENCE [MRNA]</scope>
    <source>
        <tissue>Lung</tissue>
    </source>
</reference>
<reference key="2">
    <citation type="journal article" date="2012" name="Nat. Commun.">
        <title>Quantitative maps of protein phosphorylation sites across 14 different rat organs and tissues.</title>
        <authorList>
            <person name="Lundby A."/>
            <person name="Secher A."/>
            <person name="Lage K."/>
            <person name="Nordsborg N.B."/>
            <person name="Dmytriyev A."/>
            <person name="Lundby C."/>
            <person name="Olsen J.V."/>
        </authorList>
    </citation>
    <scope>PHOSPHORYLATION [LARGE SCALE ANALYSIS] AT SER-366</scope>
    <scope>IDENTIFICATION BY MASS SPECTROMETRY [LARGE SCALE ANALYSIS]</scope>
</reference>
<organism>
    <name type="scientific">Rattus norvegicus</name>
    <name type="common">Rat</name>
    <dbReference type="NCBI Taxonomy" id="10116"/>
    <lineage>
        <taxon>Eukaryota</taxon>
        <taxon>Metazoa</taxon>
        <taxon>Chordata</taxon>
        <taxon>Craniata</taxon>
        <taxon>Vertebrata</taxon>
        <taxon>Euteleostomi</taxon>
        <taxon>Mammalia</taxon>
        <taxon>Eutheria</taxon>
        <taxon>Euarchontoglires</taxon>
        <taxon>Glires</taxon>
        <taxon>Rodentia</taxon>
        <taxon>Myomorpha</taxon>
        <taxon>Muroidea</taxon>
        <taxon>Muridae</taxon>
        <taxon>Murinae</taxon>
        <taxon>Rattus</taxon>
    </lineage>
</organism>
<gene>
    <name type="primary">Ptgir</name>
</gene>
<comment type="function">
    <text>Receptor for prostacyclin (prostaglandin I2 or PGI2). The activity of this receptor is mediated by G(s) proteins which activate adenylate cyclase.</text>
</comment>
<comment type="subunit">
    <text evidence="1">Interacts (non-isoprenylated C-terminus) with PDZK1.</text>
</comment>
<comment type="subcellular location">
    <subcellularLocation>
        <location>Cell membrane</location>
        <topology>Multi-pass membrane protein</topology>
    </subcellularLocation>
</comment>
<comment type="PTM">
    <text evidence="1">Isoprenylation does not influence ligand binding but is required for efficient coupling to the effectors adenylyl cyclase and phospholipase C.</text>
</comment>
<comment type="similarity">
    <text evidence="3">Belongs to the G-protein coupled receptor 1 family.</text>
</comment>
<dbReference type="EMBL" id="D28966">
    <property type="protein sequence ID" value="BAA06091.1"/>
    <property type="molecule type" value="mRNA"/>
</dbReference>
<dbReference type="PIR" id="S52078">
    <property type="entry name" value="S52078"/>
</dbReference>
<dbReference type="RefSeq" id="NP_001071112.1">
    <property type="nucleotide sequence ID" value="NM_001077644.1"/>
</dbReference>
<dbReference type="SMR" id="P43253"/>
<dbReference type="FunCoup" id="P43253">
    <property type="interactions" value="76"/>
</dbReference>
<dbReference type="STRING" id="10116.ENSRNOP00000022461"/>
<dbReference type="BindingDB" id="P43253"/>
<dbReference type="ChEMBL" id="CHEMBL3322"/>
<dbReference type="DrugCentral" id="P43253"/>
<dbReference type="GuidetoPHARMACOLOGY" id="345"/>
<dbReference type="GlyCosmos" id="P43253">
    <property type="glycosylation" value="1 site, No reported glycans"/>
</dbReference>
<dbReference type="GlyGen" id="P43253">
    <property type="glycosylation" value="1 site"/>
</dbReference>
<dbReference type="iPTMnet" id="P43253"/>
<dbReference type="PhosphoSitePlus" id="P43253"/>
<dbReference type="PaxDb" id="10116-ENSRNOP00000022461"/>
<dbReference type="Ensembl" id="ENSRNOT00000022461.4">
    <property type="protein sequence ID" value="ENSRNOP00000022461.2"/>
    <property type="gene ID" value="ENSRNOG00000016756.6"/>
</dbReference>
<dbReference type="GeneID" id="292661"/>
<dbReference type="KEGG" id="rno:292661"/>
<dbReference type="UCSC" id="RGD:1310890">
    <property type="organism name" value="rat"/>
</dbReference>
<dbReference type="AGR" id="RGD:1310890"/>
<dbReference type="CTD" id="5739"/>
<dbReference type="RGD" id="1310890">
    <property type="gene designation" value="Ptgir"/>
</dbReference>
<dbReference type="eggNOG" id="KOG3656">
    <property type="taxonomic scope" value="Eukaryota"/>
</dbReference>
<dbReference type="GeneTree" id="ENSGT01050000244902"/>
<dbReference type="HOGENOM" id="CLU_045991_0_1_1"/>
<dbReference type="InParanoid" id="P43253"/>
<dbReference type="OMA" id="IHPFCGD"/>
<dbReference type="OrthoDB" id="71863at9989"/>
<dbReference type="PhylomeDB" id="P43253"/>
<dbReference type="Reactome" id="R-RNO-391908">
    <property type="pathway name" value="Prostanoid ligand receptors"/>
</dbReference>
<dbReference type="Reactome" id="R-RNO-392851">
    <property type="pathway name" value="Prostacyclin signalling through prostacyclin receptor"/>
</dbReference>
<dbReference type="PRO" id="PR:P43253"/>
<dbReference type="Proteomes" id="UP000002494">
    <property type="component" value="Chromosome 1"/>
</dbReference>
<dbReference type="Bgee" id="ENSRNOG00000016756">
    <property type="expression patterns" value="Expressed in lung and 16 other cell types or tissues"/>
</dbReference>
<dbReference type="GO" id="GO:0005829">
    <property type="term" value="C:cytosol"/>
    <property type="evidence" value="ECO:0000266"/>
    <property type="project" value="RGD"/>
</dbReference>
<dbReference type="GO" id="GO:0005886">
    <property type="term" value="C:plasma membrane"/>
    <property type="evidence" value="ECO:0000266"/>
    <property type="project" value="RGD"/>
</dbReference>
<dbReference type="GO" id="GO:0016501">
    <property type="term" value="F:prostacyclin receptor activity"/>
    <property type="evidence" value="ECO:0000318"/>
    <property type="project" value="GO_Central"/>
</dbReference>
<dbReference type="GO" id="GO:0007189">
    <property type="term" value="P:adenylate cyclase-activating G protein-coupled receptor signaling pathway"/>
    <property type="evidence" value="ECO:0000266"/>
    <property type="project" value="RGD"/>
</dbReference>
<dbReference type="GO" id="GO:0006954">
    <property type="term" value="P:inflammatory response"/>
    <property type="evidence" value="ECO:0000318"/>
    <property type="project" value="GO_Central"/>
</dbReference>
<dbReference type="GO" id="GO:0010642">
    <property type="term" value="P:negative regulation of platelet-derived growth factor receptor signaling pathway"/>
    <property type="evidence" value="ECO:0000266"/>
    <property type="project" value="RGD"/>
</dbReference>
<dbReference type="GO" id="GO:0048662">
    <property type="term" value="P:negative regulation of smooth muscle cell proliferation"/>
    <property type="evidence" value="ECO:0000266"/>
    <property type="project" value="RGD"/>
</dbReference>
<dbReference type="GO" id="GO:0007204">
    <property type="term" value="P:positive regulation of cytosolic calcium ion concentration"/>
    <property type="evidence" value="ECO:0000318"/>
    <property type="project" value="GO_Central"/>
</dbReference>
<dbReference type="GO" id="GO:0032496">
    <property type="term" value="P:response to lipopolysaccharide"/>
    <property type="evidence" value="ECO:0000266"/>
    <property type="project" value="RGD"/>
</dbReference>
<dbReference type="FunFam" id="1.20.1070.10:FF:000198">
    <property type="entry name" value="Prostaglandin I2 receptor"/>
    <property type="match status" value="1"/>
</dbReference>
<dbReference type="Gene3D" id="1.20.1070.10">
    <property type="entry name" value="Rhodopsin 7-helix transmembrane proteins"/>
    <property type="match status" value="1"/>
</dbReference>
<dbReference type="InterPro" id="IPR000276">
    <property type="entry name" value="GPCR_Rhodpsn"/>
</dbReference>
<dbReference type="InterPro" id="IPR017452">
    <property type="entry name" value="GPCR_Rhodpsn_7TM"/>
</dbReference>
<dbReference type="InterPro" id="IPR008365">
    <property type="entry name" value="Prostanoid_rcpt"/>
</dbReference>
<dbReference type="InterPro" id="IPR000370">
    <property type="entry name" value="Prostglndn_IP_rcpt"/>
</dbReference>
<dbReference type="PANTHER" id="PTHR11866">
    <property type="entry name" value="G-PROTEIN COUPLED RECEPTOR FAMILY 1 MEMBER"/>
    <property type="match status" value="1"/>
</dbReference>
<dbReference type="PANTHER" id="PTHR11866:SF7">
    <property type="entry name" value="PROSTACYCLIN RECEPTOR"/>
    <property type="match status" value="1"/>
</dbReference>
<dbReference type="Pfam" id="PF00001">
    <property type="entry name" value="7tm_1"/>
    <property type="match status" value="1"/>
</dbReference>
<dbReference type="PRINTS" id="PR01788">
    <property type="entry name" value="PROSTANOIDR"/>
</dbReference>
<dbReference type="PRINTS" id="PR00856">
    <property type="entry name" value="PRSTNOIDIPR"/>
</dbReference>
<dbReference type="SUPFAM" id="SSF81321">
    <property type="entry name" value="Family A G protein-coupled receptor-like"/>
    <property type="match status" value="1"/>
</dbReference>
<dbReference type="PROSITE" id="PS00237">
    <property type="entry name" value="G_PROTEIN_RECEP_F1_1"/>
    <property type="match status" value="1"/>
</dbReference>
<dbReference type="PROSITE" id="PS50262">
    <property type="entry name" value="G_PROTEIN_RECEP_F1_2"/>
    <property type="match status" value="1"/>
</dbReference>
<evidence type="ECO:0000250" key="1"/>
<evidence type="ECO:0000255" key="2"/>
<evidence type="ECO:0000255" key="3">
    <source>
        <dbReference type="PROSITE-ProRule" id="PRU00521"/>
    </source>
</evidence>
<evidence type="ECO:0007744" key="4">
    <source>
    </source>
</evidence>
<sequence length="416" mass="44662">MVASGGRPDGPPSITPESPLIVGGREWQGMAGSCWNITYVQDSVGPATSTLMFVAGVVGNGLALGILGARRRSHPSAFAVLVTGLAVTDLLGTCFLSPAVFVAYARNSSLLGLAHGGTMLCDTFAFAMTFFGLASTLILFAMAVERCLALSHPYLYAQLDGPRCARLALPAIYAFCCLFCSLPLLGLGEHQQYCPGSWCFIRMRSPQPGGCAFSLAYASLMALLVTSIFFCNGSVTLSLCHMYRQQRRHHGSFVPTSRAREDEVYHLILLALMTGIMAVCSLPLTIRGFTQAIAPDSREMGDLHAFRFNAFNPILDPWVFILFRKAVFQRLKFWLCCLCARSVHGDLQTPLSRPVSGRRDTLAPDSLQAKEGNWVPLSTWGTGQVAPLTAVPLSGGDGCSVGMPSKTEAVVACSLC</sequence>
<protein>
    <recommendedName>
        <fullName>Prostacyclin receptor</fullName>
    </recommendedName>
    <alternativeName>
        <fullName>Prostaglandin I2 receptor</fullName>
        <shortName>PGI receptor</shortName>
        <shortName>PGI2 receptor</shortName>
    </alternativeName>
    <alternativeName>
        <fullName>Prostanoid IP receptor</fullName>
    </alternativeName>
</protein>
<feature type="chain" id="PRO_0000070077" description="Prostacyclin receptor">
    <location>
        <begin position="1"/>
        <end position="413"/>
    </location>
</feature>
<feature type="propeptide" id="PRO_0000240006" description="Removed in mature form" evidence="2">
    <location>
        <begin position="414"/>
        <end position="416"/>
    </location>
</feature>
<feature type="topological domain" description="Extracellular" evidence="2">
    <location>
        <begin position="1"/>
        <end position="45"/>
    </location>
</feature>
<feature type="transmembrane region" description="Helical; Name=1" evidence="2">
    <location>
        <begin position="46"/>
        <end position="67"/>
    </location>
</feature>
<feature type="topological domain" description="Cytoplasmic" evidence="2">
    <location>
        <begin position="68"/>
        <end position="80"/>
    </location>
</feature>
<feature type="transmembrane region" description="Helical; Name=2" evidence="2">
    <location>
        <begin position="81"/>
        <end position="105"/>
    </location>
</feature>
<feature type="topological domain" description="Extracellular" evidence="2">
    <location>
        <begin position="106"/>
        <end position="123"/>
    </location>
</feature>
<feature type="transmembrane region" description="Helical; Name=3" evidence="2">
    <location>
        <begin position="124"/>
        <end position="144"/>
    </location>
</feature>
<feature type="topological domain" description="Cytoplasmic" evidence="2">
    <location>
        <begin position="145"/>
        <end position="163"/>
    </location>
</feature>
<feature type="transmembrane region" description="Helical; Name=4" evidence="2">
    <location>
        <begin position="164"/>
        <end position="187"/>
    </location>
</feature>
<feature type="topological domain" description="Extracellular" evidence="2">
    <location>
        <begin position="188"/>
        <end position="215"/>
    </location>
</feature>
<feature type="transmembrane region" description="Helical; Name=5" evidence="2">
    <location>
        <begin position="216"/>
        <end position="237"/>
    </location>
</feature>
<feature type="topological domain" description="Cytoplasmic" evidence="2">
    <location>
        <begin position="238"/>
        <end position="264"/>
    </location>
</feature>
<feature type="transmembrane region" description="Helical; Name=6" evidence="2">
    <location>
        <begin position="265"/>
        <end position="289"/>
    </location>
</feature>
<feature type="topological domain" description="Extracellular" evidence="2">
    <location>
        <begin position="290"/>
        <end position="302"/>
    </location>
</feature>
<feature type="transmembrane region" description="Helical; Name=7" evidence="2">
    <location>
        <begin position="303"/>
        <end position="323"/>
    </location>
</feature>
<feature type="topological domain" description="Cytoplasmic" evidence="2">
    <location>
        <begin position="324"/>
        <end position="416"/>
    </location>
</feature>
<feature type="modified residue" description="Phosphoserine" evidence="4">
    <location>
        <position position="366"/>
    </location>
</feature>
<feature type="modified residue" description="Cysteine methyl ester" evidence="1">
    <location>
        <position position="413"/>
    </location>
</feature>
<feature type="lipid moiety-binding region" description="S-farnesyl cysteine" evidence="1">
    <location>
        <position position="413"/>
    </location>
</feature>
<feature type="glycosylation site" description="N-linked (GlcNAc...) asparagine" evidence="2">
    <location>
        <position position="36"/>
    </location>
</feature>
<feature type="disulfide bond" evidence="3">
    <location>
        <begin position="34"/>
        <end position="194"/>
    </location>
</feature>
<feature type="disulfide bond" evidence="3">
    <location>
        <begin position="121"/>
        <end position="199"/>
    </location>
</feature>
<accession>P43253</accession>
<keyword id="KW-1003">Cell membrane</keyword>
<keyword id="KW-1015">Disulfide bond</keyword>
<keyword id="KW-0297">G-protein coupled receptor</keyword>
<keyword id="KW-0325">Glycoprotein</keyword>
<keyword id="KW-0449">Lipoprotein</keyword>
<keyword id="KW-0472">Membrane</keyword>
<keyword id="KW-0488">Methylation</keyword>
<keyword id="KW-0597">Phosphoprotein</keyword>
<keyword id="KW-0636">Prenylation</keyword>
<keyword id="KW-0675">Receptor</keyword>
<keyword id="KW-1185">Reference proteome</keyword>
<keyword id="KW-0807">Transducer</keyword>
<keyword id="KW-0812">Transmembrane</keyword>
<keyword id="KW-1133">Transmembrane helix</keyword>